<dbReference type="EMBL" id="ACJE01000001">
    <property type="protein sequence ID" value="EHA28242.1"/>
    <property type="molecule type" value="Genomic_DNA"/>
</dbReference>
<dbReference type="SMR" id="G3XMC9"/>
<dbReference type="GlyCosmos" id="G3XMC9">
    <property type="glycosylation" value="1 site, No reported glycans"/>
</dbReference>
<dbReference type="VEuPathDB" id="FungiDB:ASPNIDRAFT2_1079556"/>
<dbReference type="HOGENOM" id="CLU_001265_54_6_1"/>
<dbReference type="OrthoDB" id="50900at5052"/>
<dbReference type="Proteomes" id="UP000009038">
    <property type="component" value="Unassembled WGS sequence"/>
</dbReference>
<dbReference type="GO" id="GO:0005886">
    <property type="term" value="C:plasma membrane"/>
    <property type="evidence" value="ECO:0007669"/>
    <property type="project" value="UniProtKB-SubCell"/>
</dbReference>
<dbReference type="GO" id="GO:0022857">
    <property type="term" value="F:transmembrane transporter activity"/>
    <property type="evidence" value="ECO:0007669"/>
    <property type="project" value="InterPro"/>
</dbReference>
<dbReference type="CDD" id="cd17330">
    <property type="entry name" value="MFS_SLC46_TetA_like"/>
    <property type="match status" value="1"/>
</dbReference>
<dbReference type="Gene3D" id="1.20.1250.20">
    <property type="entry name" value="MFS general substrate transporter like domains"/>
    <property type="match status" value="1"/>
</dbReference>
<dbReference type="InterPro" id="IPR011701">
    <property type="entry name" value="MFS"/>
</dbReference>
<dbReference type="InterPro" id="IPR020846">
    <property type="entry name" value="MFS_dom"/>
</dbReference>
<dbReference type="InterPro" id="IPR036259">
    <property type="entry name" value="MFS_trans_sf"/>
</dbReference>
<dbReference type="InterPro" id="IPR001958">
    <property type="entry name" value="Tet-R_TetA/multi-R_MdtG-like"/>
</dbReference>
<dbReference type="PANTHER" id="PTHR23504:SF3">
    <property type="entry name" value="MAJOR FACILITATOR SUPERFAMILY (MFS) PROFILE DOMAIN-CONTAINING PROTEIN"/>
    <property type="match status" value="1"/>
</dbReference>
<dbReference type="PANTHER" id="PTHR23504">
    <property type="entry name" value="MAJOR FACILITATOR SUPERFAMILY DOMAIN-CONTAINING PROTEIN 10"/>
    <property type="match status" value="1"/>
</dbReference>
<dbReference type="Pfam" id="PF07690">
    <property type="entry name" value="MFS_1"/>
    <property type="match status" value="1"/>
</dbReference>
<dbReference type="PRINTS" id="PR01035">
    <property type="entry name" value="TCRTETA"/>
</dbReference>
<dbReference type="SUPFAM" id="SSF103473">
    <property type="entry name" value="MFS general substrate transporter"/>
    <property type="match status" value="1"/>
</dbReference>
<dbReference type="PROSITE" id="PS50850">
    <property type="entry name" value="MFS"/>
    <property type="match status" value="1"/>
</dbReference>
<gene>
    <name evidence="5" type="primary">azaK</name>
    <name type="ORF">ASPNIDRAFT_188912</name>
</gene>
<reference key="1">
    <citation type="journal article" date="2011" name="Genome Res.">
        <title>Comparative genomics of citric-acid-producing Aspergillus niger ATCC 1015 versus enzyme-producing CBS 513.88.</title>
        <authorList>
            <person name="Andersen M.R."/>
            <person name="Salazar M.P."/>
            <person name="Schaap P.J."/>
            <person name="van de Vondervoort P.J.I."/>
            <person name="Culley D."/>
            <person name="Thykaer J."/>
            <person name="Frisvad J.C."/>
            <person name="Nielsen K.F."/>
            <person name="Albang R."/>
            <person name="Albermann K."/>
            <person name="Berka R.M."/>
            <person name="Braus G.H."/>
            <person name="Braus-Stromeyer S.A."/>
            <person name="Corrochano L.M."/>
            <person name="Dai Z."/>
            <person name="van Dijck P.W.M."/>
            <person name="Hofmann G."/>
            <person name="Lasure L.L."/>
            <person name="Magnuson J.K."/>
            <person name="Menke H."/>
            <person name="Meijer M."/>
            <person name="Meijer S.L."/>
            <person name="Nielsen J.B."/>
            <person name="Nielsen M.L."/>
            <person name="van Ooyen A.J.J."/>
            <person name="Pel H.J."/>
            <person name="Poulsen L."/>
            <person name="Samson R.A."/>
            <person name="Stam H."/>
            <person name="Tsang A."/>
            <person name="van den Brink J.M."/>
            <person name="Atkins A."/>
            <person name="Aerts A."/>
            <person name="Shapiro H."/>
            <person name="Pangilinan J."/>
            <person name="Salamov A."/>
            <person name="Lou Y."/>
            <person name="Lindquist E."/>
            <person name="Lucas S."/>
            <person name="Grimwood J."/>
            <person name="Grigoriev I.V."/>
            <person name="Kubicek C.P."/>
            <person name="Martinez D."/>
            <person name="van Peij N.N.M.E."/>
            <person name="Roubos J.A."/>
            <person name="Nielsen J."/>
            <person name="Baker S.E."/>
        </authorList>
    </citation>
    <scope>NUCLEOTIDE SEQUENCE [LARGE SCALE GENOMIC DNA]</scope>
    <source>
        <strain>ATCC 1015 / CBS 113.46 / FGSC A1144 / LSHB Ac4 / NCTC 3858a / NRRL 328 / USDA 3528.7</strain>
    </source>
</reference>
<reference key="2">
    <citation type="journal article" date="2012" name="Chem. Biol.">
        <title>Characterization of a silent azaphilone gene cluster from Aspergillus niger ATCC 1015 reveals a hydroxylation-mediated pyran-ring formation.</title>
        <authorList>
            <person name="Zabala A.O."/>
            <person name="Xu W."/>
            <person name="Chooi Y.H."/>
            <person name="Tang Y."/>
        </authorList>
    </citation>
    <scope>FUNCTION</scope>
    <scope>INDUCTION</scope>
</reference>
<name>AZAK_ASPNA</name>
<evidence type="ECO:0000255" key="1"/>
<evidence type="ECO:0000255" key="2">
    <source>
        <dbReference type="PROSITE-ProRule" id="PRU00498"/>
    </source>
</evidence>
<evidence type="ECO:0000256" key="3">
    <source>
        <dbReference type="SAM" id="MobiDB-lite"/>
    </source>
</evidence>
<evidence type="ECO:0000269" key="4">
    <source>
    </source>
</evidence>
<evidence type="ECO:0000303" key="5">
    <source>
    </source>
</evidence>
<evidence type="ECO:0000305" key="6"/>
<proteinExistence type="evidence at transcript level"/>
<accession>G3XMC9</accession>
<feature type="chain" id="PRO_0000437627" description="Efflux pump azaK">
    <location>
        <begin position="1"/>
        <end position="468"/>
    </location>
</feature>
<feature type="transmembrane region" description="Helical" evidence="1">
    <location>
        <begin position="43"/>
        <end position="65"/>
    </location>
</feature>
<feature type="transmembrane region" description="Helical" evidence="1">
    <location>
        <begin position="80"/>
        <end position="100"/>
    </location>
</feature>
<feature type="transmembrane region" description="Helical" evidence="1">
    <location>
        <begin position="112"/>
        <end position="132"/>
    </location>
</feature>
<feature type="transmembrane region" description="Helical" evidence="1">
    <location>
        <begin position="135"/>
        <end position="155"/>
    </location>
</feature>
<feature type="transmembrane region" description="Helical" evidence="1">
    <location>
        <begin position="174"/>
        <end position="194"/>
    </location>
</feature>
<feature type="transmembrane region" description="Helical" evidence="1">
    <location>
        <begin position="207"/>
        <end position="227"/>
    </location>
</feature>
<feature type="transmembrane region" description="Helical" evidence="1">
    <location>
        <begin position="257"/>
        <end position="277"/>
    </location>
</feature>
<feature type="transmembrane region" description="Helical" evidence="1">
    <location>
        <begin position="296"/>
        <end position="316"/>
    </location>
</feature>
<feature type="transmembrane region" description="Helical" evidence="1">
    <location>
        <begin position="329"/>
        <end position="349"/>
    </location>
</feature>
<feature type="transmembrane region" description="Helical" evidence="1">
    <location>
        <begin position="357"/>
        <end position="377"/>
    </location>
</feature>
<feature type="transmembrane region" description="Helical" evidence="1">
    <location>
        <begin position="387"/>
        <end position="407"/>
    </location>
</feature>
<feature type="transmembrane region" description="Helical" evidence="1">
    <location>
        <begin position="429"/>
        <end position="449"/>
    </location>
</feature>
<feature type="region of interest" description="Disordered" evidence="3">
    <location>
        <begin position="1"/>
        <end position="30"/>
    </location>
</feature>
<feature type="glycosylation site" description="N-linked (GlcNAc...) asparagine" evidence="2">
    <location>
        <position position="228"/>
    </location>
</feature>
<organism>
    <name type="scientific">Aspergillus niger (strain ATCC 1015 / CBS 113.46 / FGSC A1144 / LSHB Ac4 / NCTC 3858a / NRRL 328 / USDA 3528.7)</name>
    <dbReference type="NCBI Taxonomy" id="380704"/>
    <lineage>
        <taxon>Eukaryota</taxon>
        <taxon>Fungi</taxon>
        <taxon>Dikarya</taxon>
        <taxon>Ascomycota</taxon>
        <taxon>Pezizomycotina</taxon>
        <taxon>Eurotiomycetes</taxon>
        <taxon>Eurotiomycetidae</taxon>
        <taxon>Eurotiales</taxon>
        <taxon>Aspergillaceae</taxon>
        <taxon>Aspergillus</taxon>
        <taxon>Aspergillus subgen. Circumdati</taxon>
    </lineage>
</organism>
<sequence length="468" mass="50044">MTVHPPAVADETSPLLPSQDGPGHNGIVPAATKPKELQSSMSQVALLCCARAIDPLAFFTIFPFVNQMIADTAGIDEADVGFYSGIIESLFSVTQMMLMIPWARAADRMGRKPVLILSLAGLSVSSALFGFSRTLGQMVFFRCLAGTFGGTVVTVRVMISENSTPDTQARAFSYFSLANTIGTVIGPLLGGALCRPGGVFRHYPYALPTVAAGAFGVTVTVACLMFVNETRKPADHTPHETASPTWTSAKILRSQGVLPVLYIHGHSMMLAFAYTAVSPVFYFTSPRLGGYGFSPFYISLFLGGSGIAQTIWLVLVYPPLHKRLGTGNILRGLCFVWIIFLAATVGASVLHRHCEMVAFWILAPLALVLGSSVAMQLTAMQLALDSVSPSPAALGTLNAMSLAIISFLRAVAPAMFTSMYASTLKLSSPGFYTFWLVLGGLVLVLAFTLRWLPEQVEKAPRKLGRSSA</sequence>
<protein>
    <recommendedName>
        <fullName evidence="5">Efflux pump azaK</fullName>
    </recommendedName>
    <alternativeName>
        <fullName evidence="5">Azaphilone biosynthesis cluster protein azaK</fullName>
    </alternativeName>
</protein>
<comment type="function">
    <text evidence="4">Efflux pump that might be required for efficient secretion of azaphilones (PubMed:22921072).</text>
</comment>
<comment type="subcellular location">
    <subcellularLocation>
        <location evidence="6">Cell membrane</location>
        <topology evidence="1">Multi-pass membrane protein</topology>
    </subcellularLocation>
</comment>
<comment type="induction">
    <text evidence="4">Expression is under the control of the azaphilone cluster-specific transcription factor azaR (PubMed:22921072).</text>
</comment>
<comment type="similarity">
    <text evidence="6">Belongs to the major facilitator superfamily.</text>
</comment>
<keyword id="KW-1003">Cell membrane</keyword>
<keyword id="KW-0325">Glycoprotein</keyword>
<keyword id="KW-0472">Membrane</keyword>
<keyword id="KW-0812">Transmembrane</keyword>
<keyword id="KW-1133">Transmembrane helix</keyword>
<keyword id="KW-0813">Transport</keyword>